<organism>
    <name type="scientific">Yersinia pestis (strain Pestoides F)</name>
    <dbReference type="NCBI Taxonomy" id="386656"/>
    <lineage>
        <taxon>Bacteria</taxon>
        <taxon>Pseudomonadati</taxon>
        <taxon>Pseudomonadota</taxon>
        <taxon>Gammaproteobacteria</taxon>
        <taxon>Enterobacterales</taxon>
        <taxon>Yersiniaceae</taxon>
        <taxon>Yersinia</taxon>
    </lineage>
</organism>
<protein>
    <recommendedName>
        <fullName evidence="1">Protein Syd</fullName>
    </recommendedName>
</protein>
<proteinExistence type="inferred from homology"/>
<accession>A4TLA1</accession>
<name>SYDP_YERPP</name>
<comment type="function">
    <text evidence="1">Interacts with the SecY protein in vivo. May bind preferentially to an uncomplexed state of SecY, thus functioning either as a chelating agent for excess SecY in the cell or as a regulatory factor that negatively controls the translocase function.</text>
</comment>
<comment type="subcellular location">
    <subcellularLocation>
        <location evidence="1">Cell inner membrane</location>
        <topology evidence="1">Peripheral membrane protein</topology>
        <orientation evidence="1">Cytoplasmic side</orientation>
    </subcellularLocation>
    <text evidence="1">Loosely associated with the cytoplasmic side of the inner membrane, probably via SecY.</text>
</comment>
<comment type="similarity">
    <text evidence="1">Belongs to the Syd family.</text>
</comment>
<reference key="1">
    <citation type="submission" date="2007-02" db="EMBL/GenBank/DDBJ databases">
        <title>Complete sequence of chromosome of Yersinia pestis Pestoides F.</title>
        <authorList>
            <consortium name="US DOE Joint Genome Institute"/>
            <person name="Copeland A."/>
            <person name="Lucas S."/>
            <person name="Lapidus A."/>
            <person name="Barry K."/>
            <person name="Detter J.C."/>
            <person name="Glavina del Rio T."/>
            <person name="Hammon N."/>
            <person name="Israni S."/>
            <person name="Dalin E."/>
            <person name="Tice H."/>
            <person name="Pitluck S."/>
            <person name="Di Bartolo G."/>
            <person name="Chain P."/>
            <person name="Malfatti S."/>
            <person name="Shin M."/>
            <person name="Vergez L."/>
            <person name="Schmutz J."/>
            <person name="Larimer F."/>
            <person name="Land M."/>
            <person name="Hauser L."/>
            <person name="Worsham P."/>
            <person name="Chu M."/>
            <person name="Bearden S."/>
            <person name="Garcia E."/>
            <person name="Richardson P."/>
        </authorList>
    </citation>
    <scope>NUCLEOTIDE SEQUENCE [LARGE SCALE GENOMIC DNA]</scope>
    <source>
        <strain>Pestoides F</strain>
    </source>
</reference>
<sequence length="183" mass="20780">MDLNISTALRSFTQRYIDLWQQQTGHLPASKELYGVPSPCIVETGEDQVFWQPQAFLPEATLTNIERALEIQLHPDIHDFYTQQYAGDMMADLGNHRFTLLQVWSEDDFIRLQENLIGHLVTQKRLKLSPTLFLATTSSEMTMASLCNVSGNVVLEQFGSDKRTLLASTLSHFLDALRPVLPE</sequence>
<dbReference type="EMBL" id="CP000668">
    <property type="protein sequence ID" value="ABP40063.1"/>
    <property type="molecule type" value="Genomic_DNA"/>
</dbReference>
<dbReference type="RefSeq" id="WP_002212123.1">
    <property type="nucleotide sequence ID" value="NZ_CP009715.1"/>
</dbReference>
<dbReference type="SMR" id="A4TLA1"/>
<dbReference type="GeneID" id="57977526"/>
<dbReference type="KEGG" id="ypp:YPDSF_1678"/>
<dbReference type="PATRIC" id="fig|386656.14.peg.2085"/>
<dbReference type="GO" id="GO:0009898">
    <property type="term" value="C:cytoplasmic side of plasma membrane"/>
    <property type="evidence" value="ECO:0007669"/>
    <property type="project" value="InterPro"/>
</dbReference>
<dbReference type="CDD" id="cd16323">
    <property type="entry name" value="Syd"/>
    <property type="match status" value="1"/>
</dbReference>
<dbReference type="Gene3D" id="3.40.1580.20">
    <property type="entry name" value="Syd protein"/>
    <property type="match status" value="1"/>
</dbReference>
<dbReference type="HAMAP" id="MF_01104">
    <property type="entry name" value="Syd"/>
    <property type="match status" value="1"/>
</dbReference>
<dbReference type="InterPro" id="IPR009948">
    <property type="entry name" value="Syd"/>
</dbReference>
<dbReference type="InterPro" id="IPR038228">
    <property type="entry name" value="Syd_sf"/>
</dbReference>
<dbReference type="NCBIfam" id="NF003439">
    <property type="entry name" value="PRK04968.1"/>
    <property type="match status" value="1"/>
</dbReference>
<dbReference type="Pfam" id="PF07348">
    <property type="entry name" value="Syd"/>
    <property type="match status" value="1"/>
</dbReference>
<feature type="chain" id="PRO_0000298272" description="Protein Syd">
    <location>
        <begin position="1"/>
        <end position="183"/>
    </location>
</feature>
<evidence type="ECO:0000255" key="1">
    <source>
        <dbReference type="HAMAP-Rule" id="MF_01104"/>
    </source>
</evidence>
<keyword id="KW-0997">Cell inner membrane</keyword>
<keyword id="KW-1003">Cell membrane</keyword>
<keyword id="KW-0472">Membrane</keyword>
<gene>
    <name evidence="1" type="primary">syd</name>
    <name type="ordered locus">YPDSF_1678</name>
</gene>